<proteinExistence type="evidence at transcript level"/>
<feature type="chain" id="PRO_0000185445" description="Low-density lipoprotein receptor class A domain-containing protein 4">
    <location>
        <begin position="1"/>
        <end position="306"/>
    </location>
</feature>
<feature type="topological domain" description="Lumenal" evidence="2">
    <location>
        <begin position="1"/>
        <end position="64"/>
    </location>
</feature>
<feature type="transmembrane region" description="Helical" evidence="2">
    <location>
        <begin position="65"/>
        <end position="85"/>
    </location>
</feature>
<feature type="topological domain" description="Cytoplasmic" evidence="2">
    <location>
        <begin position="86"/>
        <end position="306"/>
    </location>
</feature>
<feature type="domain" description="LDL-receptor class A" evidence="3">
    <location>
        <begin position="11"/>
        <end position="48"/>
    </location>
</feature>
<feature type="region of interest" description="Disordered" evidence="4">
    <location>
        <begin position="100"/>
        <end position="127"/>
    </location>
</feature>
<feature type="region of interest" description="Disordered" evidence="4">
    <location>
        <begin position="268"/>
        <end position="306"/>
    </location>
</feature>
<feature type="short sequence motif" description="PPxY motif 1">
    <location>
        <begin position="180"/>
        <end position="183"/>
    </location>
</feature>
<feature type="short sequence motif" description="SMAD interaction motif (SIM)">
    <location>
        <begin position="208"/>
        <end position="211"/>
    </location>
</feature>
<feature type="short sequence motif" description="PPxY motif 2">
    <location>
        <begin position="252"/>
        <end position="255"/>
    </location>
</feature>
<feature type="compositionally biased region" description="Basic residues" evidence="4">
    <location>
        <begin position="269"/>
        <end position="279"/>
    </location>
</feature>
<feature type="compositionally biased region" description="Polar residues" evidence="4">
    <location>
        <begin position="281"/>
        <end position="290"/>
    </location>
</feature>
<feature type="compositionally biased region" description="Basic and acidic residues" evidence="4">
    <location>
        <begin position="296"/>
        <end position="306"/>
    </location>
</feature>
<feature type="disulfide bond" evidence="3">
    <location>
        <begin position="19"/>
        <end position="38"/>
    </location>
</feature>
<feature type="disulfide bond" evidence="3">
    <location>
        <begin position="32"/>
        <end position="47"/>
    </location>
</feature>
<dbReference type="EMBL" id="AK052338">
    <property type="protein sequence ID" value="BAC34943.1"/>
    <property type="molecule type" value="mRNA"/>
</dbReference>
<dbReference type="CCDS" id="CCDS29325.1"/>
<dbReference type="RefSeq" id="NP_766219.2">
    <property type="nucleotide sequence ID" value="NM_172631.3"/>
</dbReference>
<dbReference type="RefSeq" id="XP_006526148.1">
    <property type="nucleotide sequence ID" value="XM_006526085.4"/>
</dbReference>
<dbReference type="RefSeq" id="XP_006526149.1">
    <property type="nucleotide sequence ID" value="XM_006526086.4"/>
</dbReference>
<dbReference type="RefSeq" id="XP_006526150.1">
    <property type="nucleotide sequence ID" value="XM_006526087.4"/>
</dbReference>
<dbReference type="RefSeq" id="XP_006526151.1">
    <property type="nucleotide sequence ID" value="XM_006526088.5"/>
</dbReference>
<dbReference type="RefSeq" id="XP_006526152.1">
    <property type="nucleotide sequence ID" value="XM_006526089.4"/>
</dbReference>
<dbReference type="RefSeq" id="XP_030106396.1">
    <property type="nucleotide sequence ID" value="XM_030250536.1"/>
</dbReference>
<dbReference type="RefSeq" id="XP_030106397.1">
    <property type="nucleotide sequence ID" value="XM_030250537.1"/>
</dbReference>
<dbReference type="RefSeq" id="XP_030106398.1">
    <property type="nucleotide sequence ID" value="XM_030250538.1"/>
</dbReference>
<dbReference type="FunCoup" id="Q8BWJ4">
    <property type="interactions" value="829"/>
</dbReference>
<dbReference type="STRING" id="10090.ENSMUSP00000068471"/>
<dbReference type="GlyGen" id="Q8BWJ4">
    <property type="glycosylation" value="1 site, 1 N-linked glycan (1 site)"/>
</dbReference>
<dbReference type="PhosphoSitePlus" id="Q8BWJ4"/>
<dbReference type="PaxDb" id="10090-ENSMUSP00000068471"/>
<dbReference type="ProteomicsDB" id="287260"/>
<dbReference type="Antibodypedia" id="21959">
    <property type="antibodies" value="67 antibodies from 9 providers"/>
</dbReference>
<dbReference type="Ensembl" id="ENSMUST00000063775.5">
    <property type="protein sequence ID" value="ENSMUSP00000068471.4"/>
    <property type="gene ID" value="ENSMUSG00000024544.10"/>
</dbReference>
<dbReference type="GeneID" id="52662"/>
<dbReference type="KEGG" id="mmu:52662"/>
<dbReference type="UCSC" id="uc008fng.1">
    <property type="organism name" value="mouse"/>
</dbReference>
<dbReference type="AGR" id="MGI:1277150"/>
<dbReference type="CTD" id="753"/>
<dbReference type="MGI" id="MGI:1277150">
    <property type="gene designation" value="Ldlrad4"/>
</dbReference>
<dbReference type="VEuPathDB" id="HostDB:ENSMUSG00000024544"/>
<dbReference type="eggNOG" id="ENOG502QRYK">
    <property type="taxonomic scope" value="Eukaryota"/>
</dbReference>
<dbReference type="GeneTree" id="ENSGT00390000000724"/>
<dbReference type="HOGENOM" id="CLU_074371_0_1_1"/>
<dbReference type="InParanoid" id="Q8BWJ4"/>
<dbReference type="OMA" id="RECKFTC"/>
<dbReference type="OrthoDB" id="10038550at2759"/>
<dbReference type="PhylomeDB" id="Q8BWJ4"/>
<dbReference type="TreeFam" id="TF331681"/>
<dbReference type="BioGRID-ORCS" id="52662">
    <property type="hits" value="0 hits in 75 CRISPR screens"/>
</dbReference>
<dbReference type="ChiTaRS" id="Ldlrad4">
    <property type="organism name" value="mouse"/>
</dbReference>
<dbReference type="PRO" id="PR:Q8BWJ4"/>
<dbReference type="Proteomes" id="UP000000589">
    <property type="component" value="Chromosome 18"/>
</dbReference>
<dbReference type="RNAct" id="Q8BWJ4">
    <property type="molecule type" value="protein"/>
</dbReference>
<dbReference type="Bgee" id="ENSMUSG00000024544">
    <property type="expression patterns" value="Expressed in ascending aorta and 177 other cell types or tissues"/>
</dbReference>
<dbReference type="ExpressionAtlas" id="Q8BWJ4">
    <property type="expression patterns" value="baseline and differential"/>
</dbReference>
<dbReference type="GO" id="GO:0031901">
    <property type="term" value="C:early endosome membrane"/>
    <property type="evidence" value="ECO:0000250"/>
    <property type="project" value="UniProtKB"/>
</dbReference>
<dbReference type="GO" id="GO:0070412">
    <property type="term" value="F:R-SMAD binding"/>
    <property type="evidence" value="ECO:0007669"/>
    <property type="project" value="Ensembl"/>
</dbReference>
<dbReference type="GO" id="GO:0030336">
    <property type="term" value="P:negative regulation of cell migration"/>
    <property type="evidence" value="ECO:0000250"/>
    <property type="project" value="UniProtKB"/>
</dbReference>
<dbReference type="GO" id="GO:0010719">
    <property type="term" value="P:negative regulation of epithelial to mesenchymal transition"/>
    <property type="evidence" value="ECO:0000250"/>
    <property type="project" value="UniProtKB"/>
</dbReference>
<dbReference type="GO" id="GO:0060392">
    <property type="term" value="P:negative regulation of SMAD protein signal transduction"/>
    <property type="evidence" value="ECO:0000250"/>
    <property type="project" value="UniProtKB"/>
</dbReference>
<dbReference type="GO" id="GO:0030512">
    <property type="term" value="P:negative regulation of transforming growth factor beta receptor signaling pathway"/>
    <property type="evidence" value="ECO:0000315"/>
    <property type="project" value="UniProtKB"/>
</dbReference>
<dbReference type="CDD" id="cd00112">
    <property type="entry name" value="LDLa"/>
    <property type="match status" value="1"/>
</dbReference>
<dbReference type="Gene3D" id="4.10.400.10">
    <property type="entry name" value="Low-density Lipoprotein Receptor"/>
    <property type="match status" value="1"/>
</dbReference>
<dbReference type="InterPro" id="IPR036055">
    <property type="entry name" value="LDL_receptor-like_sf"/>
</dbReference>
<dbReference type="InterPro" id="IPR023415">
    <property type="entry name" value="LDLR_class-A_CS"/>
</dbReference>
<dbReference type="InterPro" id="IPR002172">
    <property type="entry name" value="LDrepeatLR_classA_rpt"/>
</dbReference>
<dbReference type="InterPro" id="IPR043445">
    <property type="entry name" value="TMEPAI/LRAD4"/>
</dbReference>
<dbReference type="PANTHER" id="PTHR16514">
    <property type="entry name" value="LOW DENSITY LIPOPROTEIN RECEPTOR CLASS A DOMAIN-CONTAINING 4A"/>
    <property type="match status" value="1"/>
</dbReference>
<dbReference type="PANTHER" id="PTHR16514:SF4">
    <property type="entry name" value="LOW-DENSITY LIPOPROTEIN RECEPTOR CLASS A DOMAIN-CONTAINING PROTEIN 4"/>
    <property type="match status" value="1"/>
</dbReference>
<dbReference type="Pfam" id="PF00057">
    <property type="entry name" value="Ldl_recept_a"/>
    <property type="match status" value="1"/>
</dbReference>
<dbReference type="SMART" id="SM00192">
    <property type="entry name" value="LDLa"/>
    <property type="match status" value="1"/>
</dbReference>
<dbReference type="SUPFAM" id="SSF57424">
    <property type="entry name" value="LDL receptor-like module"/>
    <property type="match status" value="1"/>
</dbReference>
<dbReference type="PROSITE" id="PS01209">
    <property type="entry name" value="LDLRA_1"/>
    <property type="match status" value="1"/>
</dbReference>
<dbReference type="PROSITE" id="PS50068">
    <property type="entry name" value="LDLRA_2"/>
    <property type="match status" value="1"/>
</dbReference>
<gene>
    <name type="primary">Ldlrad4</name>
    <name type="synonym">D18Ertd653e</name>
</gene>
<comment type="function">
    <text evidence="5">Functions as a negative regulator of TGF-beta signaling and thereby probably plays a role in cell proliferation, differentiation, apoptosis, motility, extracellular matrix production and immunosuppression. In the canonical TGF-beta pathway, ZFYVE9/SARA recruits the intracellular signal transducer and transcriptional modulators SMAD2 and SMAD3 to the TGF-beta receptor. Phosphorylated by the receptor, SMAD2 and SMAD3 then form a heteromeric complex with SMAD4 that translocates to the nucleus to regulate transcription. Through interaction with SMAD2 and SMAD3, LDLRAD4 may compete with ZFYVE9 and SMAD4 and prevent propagation of the intracellular signal.</text>
</comment>
<comment type="subunit">
    <text evidence="1">Interacts with PMEPA1. Interacts (via the SMAD interaction motif) with SMAD2 and SMAD3 (By similarity).</text>
</comment>
<comment type="subcellular location">
    <subcellularLocation>
        <location evidence="1">Early endosome membrane</location>
        <topology evidence="1">Single-pass membrane protein</topology>
    </subcellularLocation>
</comment>
<comment type="tissue specificity">
    <text evidence="5">Detected in all tissues tested.</text>
</comment>
<comment type="domain">
    <text evidence="1">The SMAD interaction motif is required for interaction with SMAD2 and SMAD3 and the negative regulation of TGF-beta signaling.</text>
</comment>
<comment type="similarity">
    <text evidence="6">Belongs to the PMEPA1 family.</text>
</comment>
<protein>
    <recommendedName>
        <fullName>Low-density lipoprotein receptor class A domain-containing protein 4</fullName>
    </recommendedName>
</protein>
<accession>Q8BWJ4</accession>
<name>LRAD4_MOUSE</name>
<organism>
    <name type="scientific">Mus musculus</name>
    <name type="common">Mouse</name>
    <dbReference type="NCBI Taxonomy" id="10090"/>
    <lineage>
        <taxon>Eukaryota</taxon>
        <taxon>Metazoa</taxon>
        <taxon>Chordata</taxon>
        <taxon>Craniata</taxon>
        <taxon>Vertebrata</taxon>
        <taxon>Euteleostomi</taxon>
        <taxon>Mammalia</taxon>
        <taxon>Eutheria</taxon>
        <taxon>Euarchontoglires</taxon>
        <taxon>Glires</taxon>
        <taxon>Rodentia</taxon>
        <taxon>Myomorpha</taxon>
        <taxon>Muroidea</taxon>
        <taxon>Muridae</taxon>
        <taxon>Murinae</taxon>
        <taxon>Mus</taxon>
        <taxon>Mus</taxon>
    </lineage>
</organism>
<sequence>MPEAGFQATNAFTECKFTCTSGKCLYLGSLVCNQQNDCGDNSDEENCLLVTEHPPPGIFNSELEFAQILIIVVVVTVMVVVVVCLLNHYKVSTRSFINRPNQSQRQEDGLQPEGSLWPSDSSVQRPGASEIMCAPRGRDRFTTPSFIQRDPFSRFQPTYPYVQHEIDLPPTISLSDGEEPPPYQGPCTLQLRDPEQQMELNRESVRAPPNRTVFDSDLIDISMYNGGPCPPSSHSGISAATCSSNGRMEGPPPTYSEVMGHYPGTSFFHHQHSNTHRGSRPQFQPNNSEGTIVPIKGKDRKPGDLV</sequence>
<reference key="1">
    <citation type="journal article" date="2005" name="Science">
        <title>The transcriptional landscape of the mammalian genome.</title>
        <authorList>
            <person name="Carninci P."/>
            <person name="Kasukawa T."/>
            <person name="Katayama S."/>
            <person name="Gough J."/>
            <person name="Frith M.C."/>
            <person name="Maeda N."/>
            <person name="Oyama R."/>
            <person name="Ravasi T."/>
            <person name="Lenhard B."/>
            <person name="Wells C."/>
            <person name="Kodzius R."/>
            <person name="Shimokawa K."/>
            <person name="Bajic V.B."/>
            <person name="Brenner S.E."/>
            <person name="Batalov S."/>
            <person name="Forrest A.R."/>
            <person name="Zavolan M."/>
            <person name="Davis M.J."/>
            <person name="Wilming L.G."/>
            <person name="Aidinis V."/>
            <person name="Allen J.E."/>
            <person name="Ambesi-Impiombato A."/>
            <person name="Apweiler R."/>
            <person name="Aturaliya R.N."/>
            <person name="Bailey T.L."/>
            <person name="Bansal M."/>
            <person name="Baxter L."/>
            <person name="Beisel K.W."/>
            <person name="Bersano T."/>
            <person name="Bono H."/>
            <person name="Chalk A.M."/>
            <person name="Chiu K.P."/>
            <person name="Choudhary V."/>
            <person name="Christoffels A."/>
            <person name="Clutterbuck D.R."/>
            <person name="Crowe M.L."/>
            <person name="Dalla E."/>
            <person name="Dalrymple B.P."/>
            <person name="de Bono B."/>
            <person name="Della Gatta G."/>
            <person name="di Bernardo D."/>
            <person name="Down T."/>
            <person name="Engstrom P."/>
            <person name="Fagiolini M."/>
            <person name="Faulkner G."/>
            <person name="Fletcher C.F."/>
            <person name="Fukushima T."/>
            <person name="Furuno M."/>
            <person name="Futaki S."/>
            <person name="Gariboldi M."/>
            <person name="Georgii-Hemming P."/>
            <person name="Gingeras T.R."/>
            <person name="Gojobori T."/>
            <person name="Green R.E."/>
            <person name="Gustincich S."/>
            <person name="Harbers M."/>
            <person name="Hayashi Y."/>
            <person name="Hensch T.K."/>
            <person name="Hirokawa N."/>
            <person name="Hill D."/>
            <person name="Huminiecki L."/>
            <person name="Iacono M."/>
            <person name="Ikeo K."/>
            <person name="Iwama A."/>
            <person name="Ishikawa T."/>
            <person name="Jakt M."/>
            <person name="Kanapin A."/>
            <person name="Katoh M."/>
            <person name="Kawasawa Y."/>
            <person name="Kelso J."/>
            <person name="Kitamura H."/>
            <person name="Kitano H."/>
            <person name="Kollias G."/>
            <person name="Krishnan S.P."/>
            <person name="Kruger A."/>
            <person name="Kummerfeld S.K."/>
            <person name="Kurochkin I.V."/>
            <person name="Lareau L.F."/>
            <person name="Lazarevic D."/>
            <person name="Lipovich L."/>
            <person name="Liu J."/>
            <person name="Liuni S."/>
            <person name="McWilliam S."/>
            <person name="Madan Babu M."/>
            <person name="Madera M."/>
            <person name="Marchionni L."/>
            <person name="Matsuda H."/>
            <person name="Matsuzawa S."/>
            <person name="Miki H."/>
            <person name="Mignone F."/>
            <person name="Miyake S."/>
            <person name="Morris K."/>
            <person name="Mottagui-Tabar S."/>
            <person name="Mulder N."/>
            <person name="Nakano N."/>
            <person name="Nakauchi H."/>
            <person name="Ng P."/>
            <person name="Nilsson R."/>
            <person name="Nishiguchi S."/>
            <person name="Nishikawa S."/>
            <person name="Nori F."/>
            <person name="Ohara O."/>
            <person name="Okazaki Y."/>
            <person name="Orlando V."/>
            <person name="Pang K.C."/>
            <person name="Pavan W.J."/>
            <person name="Pavesi G."/>
            <person name="Pesole G."/>
            <person name="Petrovsky N."/>
            <person name="Piazza S."/>
            <person name="Reed J."/>
            <person name="Reid J.F."/>
            <person name="Ring B.Z."/>
            <person name="Ringwald M."/>
            <person name="Rost B."/>
            <person name="Ruan Y."/>
            <person name="Salzberg S.L."/>
            <person name="Sandelin A."/>
            <person name="Schneider C."/>
            <person name="Schoenbach C."/>
            <person name="Sekiguchi K."/>
            <person name="Semple C.A."/>
            <person name="Seno S."/>
            <person name="Sessa L."/>
            <person name="Sheng Y."/>
            <person name="Shibata Y."/>
            <person name="Shimada H."/>
            <person name="Shimada K."/>
            <person name="Silva D."/>
            <person name="Sinclair B."/>
            <person name="Sperling S."/>
            <person name="Stupka E."/>
            <person name="Sugiura K."/>
            <person name="Sultana R."/>
            <person name="Takenaka Y."/>
            <person name="Taki K."/>
            <person name="Tammoja K."/>
            <person name="Tan S.L."/>
            <person name="Tang S."/>
            <person name="Taylor M.S."/>
            <person name="Tegner J."/>
            <person name="Teichmann S.A."/>
            <person name="Ueda H.R."/>
            <person name="van Nimwegen E."/>
            <person name="Verardo R."/>
            <person name="Wei C.L."/>
            <person name="Yagi K."/>
            <person name="Yamanishi H."/>
            <person name="Zabarovsky E."/>
            <person name="Zhu S."/>
            <person name="Zimmer A."/>
            <person name="Hide W."/>
            <person name="Bult C."/>
            <person name="Grimmond S.M."/>
            <person name="Teasdale R.D."/>
            <person name="Liu E.T."/>
            <person name="Brusic V."/>
            <person name="Quackenbush J."/>
            <person name="Wahlestedt C."/>
            <person name="Mattick J.S."/>
            <person name="Hume D.A."/>
            <person name="Kai C."/>
            <person name="Sasaki D."/>
            <person name="Tomaru Y."/>
            <person name="Fukuda S."/>
            <person name="Kanamori-Katayama M."/>
            <person name="Suzuki M."/>
            <person name="Aoki J."/>
            <person name="Arakawa T."/>
            <person name="Iida J."/>
            <person name="Imamura K."/>
            <person name="Itoh M."/>
            <person name="Kato T."/>
            <person name="Kawaji H."/>
            <person name="Kawagashira N."/>
            <person name="Kawashima T."/>
            <person name="Kojima M."/>
            <person name="Kondo S."/>
            <person name="Konno H."/>
            <person name="Nakano K."/>
            <person name="Ninomiya N."/>
            <person name="Nishio T."/>
            <person name="Okada M."/>
            <person name="Plessy C."/>
            <person name="Shibata K."/>
            <person name="Shiraki T."/>
            <person name="Suzuki S."/>
            <person name="Tagami M."/>
            <person name="Waki K."/>
            <person name="Watahiki A."/>
            <person name="Okamura-Oho Y."/>
            <person name="Suzuki H."/>
            <person name="Kawai J."/>
            <person name="Hayashizaki Y."/>
        </authorList>
    </citation>
    <scope>NUCLEOTIDE SEQUENCE [LARGE SCALE MRNA]</scope>
    <source>
        <strain>C57BL/6J</strain>
        <tissue>Heart</tissue>
    </source>
</reference>
<reference key="2">
    <citation type="journal article" date="2014" name="J. Biol. Chem.">
        <title>C18 ORF1, a novel negative regulator of transforming growth factor-beta signaling.</title>
        <authorList>
            <person name="Nakano N."/>
            <person name="Maeyama K."/>
            <person name="Sakata N."/>
            <person name="Itoh F."/>
            <person name="Akatsu R."/>
            <person name="Nakata M."/>
            <person name="Katsu Y."/>
            <person name="Ikeno S."/>
            <person name="Togawa Y."/>
            <person name="Vo Nguyen T.T."/>
            <person name="Watanabe Y."/>
            <person name="Kato M."/>
            <person name="Itoh S."/>
        </authorList>
    </citation>
    <scope>FUNCTION</scope>
    <scope>TISSUE SPECIFICITY</scope>
</reference>
<keyword id="KW-1015">Disulfide bond</keyword>
<keyword id="KW-0967">Endosome</keyword>
<keyword id="KW-0472">Membrane</keyword>
<keyword id="KW-1185">Reference proteome</keyword>
<keyword id="KW-0734">Signal transduction inhibitor</keyword>
<keyword id="KW-0812">Transmembrane</keyword>
<keyword id="KW-1133">Transmembrane helix</keyword>
<evidence type="ECO:0000250" key="1"/>
<evidence type="ECO:0000255" key="2"/>
<evidence type="ECO:0000255" key="3">
    <source>
        <dbReference type="PROSITE-ProRule" id="PRU00124"/>
    </source>
</evidence>
<evidence type="ECO:0000256" key="4">
    <source>
        <dbReference type="SAM" id="MobiDB-lite"/>
    </source>
</evidence>
<evidence type="ECO:0000269" key="5">
    <source>
    </source>
</evidence>
<evidence type="ECO:0000305" key="6"/>